<organism>
    <name type="scientific">Bacillus subtilis (strain 168)</name>
    <dbReference type="NCBI Taxonomy" id="224308"/>
    <lineage>
        <taxon>Bacteria</taxon>
        <taxon>Bacillati</taxon>
        <taxon>Bacillota</taxon>
        <taxon>Bacilli</taxon>
        <taxon>Bacillales</taxon>
        <taxon>Bacillaceae</taxon>
        <taxon>Bacillus</taxon>
    </lineage>
</organism>
<feature type="chain" id="PRO_0000110595" description="Glutaminase 2">
    <location>
        <begin position="1"/>
        <end position="309"/>
    </location>
</feature>
<feature type="binding site" evidence="1">
    <location>
        <position position="65"/>
    </location>
    <ligand>
        <name>substrate</name>
    </ligand>
</feature>
<feature type="binding site" evidence="1">
    <location>
        <position position="117"/>
    </location>
    <ligand>
        <name>substrate</name>
    </ligand>
</feature>
<feature type="binding site" evidence="1">
    <location>
        <position position="162"/>
    </location>
    <ligand>
        <name>substrate</name>
    </ligand>
</feature>
<feature type="binding site" evidence="1">
    <location>
        <position position="169"/>
    </location>
    <ligand>
        <name>substrate</name>
    </ligand>
</feature>
<feature type="binding site" evidence="1">
    <location>
        <position position="193"/>
    </location>
    <ligand>
        <name>substrate</name>
    </ligand>
</feature>
<feature type="binding site" evidence="1">
    <location>
        <position position="245"/>
    </location>
    <ligand>
        <name>substrate</name>
    </ligand>
</feature>
<feature type="binding site" evidence="1">
    <location>
        <position position="263"/>
    </location>
    <ligand>
        <name>substrate</name>
    </ligand>
</feature>
<proteinExistence type="evidence at protein level"/>
<reference key="1">
    <citation type="submission" date="1997-06" db="EMBL/GenBank/DDBJ databases">
        <title>Bacillus subtilis chromosomal region downstream nprE.</title>
        <authorList>
            <person name="Purnelle B."/>
            <person name="Presecan E."/>
            <person name="Glaser P."/>
            <person name="Richou A."/>
            <person name="Danchin A."/>
            <person name="Goffeau A."/>
        </authorList>
    </citation>
    <scope>NUCLEOTIDE SEQUENCE [GENOMIC DNA]</scope>
    <source>
        <strain>168</strain>
    </source>
</reference>
<reference key="2">
    <citation type="journal article" date="1997" name="Nature">
        <title>The complete genome sequence of the Gram-positive bacterium Bacillus subtilis.</title>
        <authorList>
            <person name="Kunst F."/>
            <person name="Ogasawara N."/>
            <person name="Moszer I."/>
            <person name="Albertini A.M."/>
            <person name="Alloni G."/>
            <person name="Azevedo V."/>
            <person name="Bertero M.G."/>
            <person name="Bessieres P."/>
            <person name="Bolotin A."/>
            <person name="Borchert S."/>
            <person name="Borriss R."/>
            <person name="Boursier L."/>
            <person name="Brans A."/>
            <person name="Braun M."/>
            <person name="Brignell S.C."/>
            <person name="Bron S."/>
            <person name="Brouillet S."/>
            <person name="Bruschi C.V."/>
            <person name="Caldwell B."/>
            <person name="Capuano V."/>
            <person name="Carter N.M."/>
            <person name="Choi S.-K."/>
            <person name="Codani J.-J."/>
            <person name="Connerton I.F."/>
            <person name="Cummings N.J."/>
            <person name="Daniel R.A."/>
            <person name="Denizot F."/>
            <person name="Devine K.M."/>
            <person name="Duesterhoeft A."/>
            <person name="Ehrlich S.D."/>
            <person name="Emmerson P.T."/>
            <person name="Entian K.-D."/>
            <person name="Errington J."/>
            <person name="Fabret C."/>
            <person name="Ferrari E."/>
            <person name="Foulger D."/>
            <person name="Fritz C."/>
            <person name="Fujita M."/>
            <person name="Fujita Y."/>
            <person name="Fuma S."/>
            <person name="Galizzi A."/>
            <person name="Galleron N."/>
            <person name="Ghim S.-Y."/>
            <person name="Glaser P."/>
            <person name="Goffeau A."/>
            <person name="Golightly E.J."/>
            <person name="Grandi G."/>
            <person name="Guiseppi G."/>
            <person name="Guy B.J."/>
            <person name="Haga K."/>
            <person name="Haiech J."/>
            <person name="Harwood C.R."/>
            <person name="Henaut A."/>
            <person name="Hilbert H."/>
            <person name="Holsappel S."/>
            <person name="Hosono S."/>
            <person name="Hullo M.-F."/>
            <person name="Itaya M."/>
            <person name="Jones L.-M."/>
            <person name="Joris B."/>
            <person name="Karamata D."/>
            <person name="Kasahara Y."/>
            <person name="Klaerr-Blanchard M."/>
            <person name="Klein C."/>
            <person name="Kobayashi Y."/>
            <person name="Koetter P."/>
            <person name="Koningstein G."/>
            <person name="Krogh S."/>
            <person name="Kumano M."/>
            <person name="Kurita K."/>
            <person name="Lapidus A."/>
            <person name="Lardinois S."/>
            <person name="Lauber J."/>
            <person name="Lazarevic V."/>
            <person name="Lee S.-M."/>
            <person name="Levine A."/>
            <person name="Liu H."/>
            <person name="Masuda S."/>
            <person name="Mauel C."/>
            <person name="Medigue C."/>
            <person name="Medina N."/>
            <person name="Mellado R.P."/>
            <person name="Mizuno M."/>
            <person name="Moestl D."/>
            <person name="Nakai S."/>
            <person name="Noback M."/>
            <person name="Noone D."/>
            <person name="O'Reilly M."/>
            <person name="Ogawa K."/>
            <person name="Ogiwara A."/>
            <person name="Oudega B."/>
            <person name="Park S.-H."/>
            <person name="Parro V."/>
            <person name="Pohl T.M."/>
            <person name="Portetelle D."/>
            <person name="Porwollik S."/>
            <person name="Prescott A.M."/>
            <person name="Presecan E."/>
            <person name="Pujic P."/>
            <person name="Purnelle B."/>
            <person name="Rapoport G."/>
            <person name="Rey M."/>
            <person name="Reynolds S."/>
            <person name="Rieger M."/>
            <person name="Rivolta C."/>
            <person name="Rocha E."/>
            <person name="Roche B."/>
            <person name="Rose M."/>
            <person name="Sadaie Y."/>
            <person name="Sato T."/>
            <person name="Scanlan E."/>
            <person name="Schleich S."/>
            <person name="Schroeter R."/>
            <person name="Scoffone F."/>
            <person name="Sekiguchi J."/>
            <person name="Sekowska A."/>
            <person name="Seror S.J."/>
            <person name="Serror P."/>
            <person name="Shin B.-S."/>
            <person name="Soldo B."/>
            <person name="Sorokin A."/>
            <person name="Tacconi E."/>
            <person name="Takagi T."/>
            <person name="Takahashi H."/>
            <person name="Takemaru K."/>
            <person name="Takeuchi M."/>
            <person name="Tamakoshi A."/>
            <person name="Tanaka T."/>
            <person name="Terpstra P."/>
            <person name="Tognoni A."/>
            <person name="Tosato V."/>
            <person name="Uchiyama S."/>
            <person name="Vandenbol M."/>
            <person name="Vannier F."/>
            <person name="Vassarotti A."/>
            <person name="Viari A."/>
            <person name="Wambutt R."/>
            <person name="Wedler E."/>
            <person name="Wedler H."/>
            <person name="Weitzenegger T."/>
            <person name="Winters P."/>
            <person name="Wipat A."/>
            <person name="Yamamoto H."/>
            <person name="Yamane K."/>
            <person name="Yasumoto K."/>
            <person name="Yata K."/>
            <person name="Yoshida K."/>
            <person name="Yoshikawa H.-F."/>
            <person name="Zumstein E."/>
            <person name="Yoshikawa H."/>
            <person name="Danchin A."/>
        </authorList>
    </citation>
    <scope>NUCLEOTIDE SEQUENCE [LARGE SCALE GENOMIC DNA]</scope>
    <source>
        <strain>168</strain>
    </source>
</reference>
<reference key="3">
    <citation type="journal article" date="2008" name="Biochemistry">
        <title>Functional and structural characterization of four glutaminases from Escherichia coli and Bacillus subtilis.</title>
        <authorList>
            <person name="Brown G."/>
            <person name="Singer A."/>
            <person name="Proudfoot M."/>
            <person name="Skarina T."/>
            <person name="Kim Y."/>
            <person name="Chang C."/>
            <person name="Dementieva I."/>
            <person name="Kuznetsova E."/>
            <person name="Gonzalez C.F."/>
            <person name="Joachimiak A."/>
            <person name="Savchenko A."/>
            <person name="Yakunin A.F."/>
        </authorList>
    </citation>
    <scope>CATALYTIC ACTIVITY</scope>
    <scope>BIOPHYSICOCHEMICAL PROPERTIES</scope>
    <scope>SUBUNIT</scope>
</reference>
<dbReference type="EC" id="3.5.1.2" evidence="1"/>
<dbReference type="EMBL" id="Z97025">
    <property type="protein sequence ID" value="CAB09718.1"/>
    <property type="molecule type" value="Genomic_DNA"/>
</dbReference>
<dbReference type="EMBL" id="AL009126">
    <property type="protein sequence ID" value="CAB13356.1"/>
    <property type="molecule type" value="Genomic_DNA"/>
</dbReference>
<dbReference type="PIR" id="C69873">
    <property type="entry name" value="C69873"/>
</dbReference>
<dbReference type="SMR" id="O07637"/>
<dbReference type="FunCoup" id="O07637">
    <property type="interactions" value="190"/>
</dbReference>
<dbReference type="STRING" id="224308.BSU14830"/>
<dbReference type="PaxDb" id="224308-BSU14830"/>
<dbReference type="EnsemblBacteria" id="CAB13356">
    <property type="protein sequence ID" value="CAB13356"/>
    <property type="gene ID" value="BSU_14830"/>
</dbReference>
<dbReference type="GeneID" id="939852"/>
<dbReference type="KEGG" id="bsu:BSU14830"/>
<dbReference type="PATRIC" id="fig|224308.179.peg.1617"/>
<dbReference type="eggNOG" id="COG2066">
    <property type="taxonomic scope" value="Bacteria"/>
</dbReference>
<dbReference type="InParanoid" id="O07637"/>
<dbReference type="OrthoDB" id="9788822at2"/>
<dbReference type="PhylomeDB" id="O07637"/>
<dbReference type="BioCyc" id="BSUB:BSU14830-MONOMER"/>
<dbReference type="BRENDA" id="3.5.1.2">
    <property type="organism ID" value="658"/>
</dbReference>
<dbReference type="SABIO-RK" id="O07637"/>
<dbReference type="PRO" id="PR:O07637"/>
<dbReference type="Proteomes" id="UP000001570">
    <property type="component" value="Chromosome"/>
</dbReference>
<dbReference type="GO" id="GO:0004359">
    <property type="term" value="F:glutaminase activity"/>
    <property type="evidence" value="ECO:0000318"/>
    <property type="project" value="GO_Central"/>
</dbReference>
<dbReference type="GO" id="GO:0006537">
    <property type="term" value="P:glutamate biosynthetic process"/>
    <property type="evidence" value="ECO:0000318"/>
    <property type="project" value="GO_Central"/>
</dbReference>
<dbReference type="GO" id="GO:0006543">
    <property type="term" value="P:glutamine catabolic process"/>
    <property type="evidence" value="ECO:0000318"/>
    <property type="project" value="GO_Central"/>
</dbReference>
<dbReference type="FunFam" id="3.40.710.10:FF:000005">
    <property type="entry name" value="Glutaminase"/>
    <property type="match status" value="1"/>
</dbReference>
<dbReference type="Gene3D" id="3.40.710.10">
    <property type="entry name" value="DD-peptidase/beta-lactamase superfamily"/>
    <property type="match status" value="1"/>
</dbReference>
<dbReference type="HAMAP" id="MF_00313">
    <property type="entry name" value="Glutaminase"/>
    <property type="match status" value="1"/>
</dbReference>
<dbReference type="InterPro" id="IPR012338">
    <property type="entry name" value="Beta-lactam/transpept-like"/>
</dbReference>
<dbReference type="InterPro" id="IPR015868">
    <property type="entry name" value="Glutaminase"/>
</dbReference>
<dbReference type="NCBIfam" id="TIGR03814">
    <property type="entry name" value="Gln_ase"/>
    <property type="match status" value="1"/>
</dbReference>
<dbReference type="PANTHER" id="PTHR12544">
    <property type="entry name" value="GLUTAMINASE"/>
    <property type="match status" value="1"/>
</dbReference>
<dbReference type="PANTHER" id="PTHR12544:SF29">
    <property type="entry name" value="GLUTAMINASE"/>
    <property type="match status" value="1"/>
</dbReference>
<dbReference type="Pfam" id="PF04960">
    <property type="entry name" value="Glutaminase"/>
    <property type="match status" value="1"/>
</dbReference>
<dbReference type="SUPFAM" id="SSF56601">
    <property type="entry name" value="beta-lactamase/transpeptidase-like"/>
    <property type="match status" value="1"/>
</dbReference>
<name>GLSA2_BACSU</name>
<sequence>MVCQHNDELEALVKKAKKVTDKGEVASYIPALAKADKHDLSVAIYYSNNVCLSAGDVEKTFTLQSISKVLSLALVLMEYGKDKVFSYVGQEPTGDPFNSIIKLETVNPSKPLNPMINAGALVVTSLIRGRTVKERLDYLLSFIRRLTNNQEITYCREVAESEYSTSMINRAMCYYMKQYGIFEDDVEAVMDLYTKQCAIEMNSLDLAKIGSVFALNGRHPETGEQVISKDVARICKTFMVTCGMYNASGEFAIKVGIPAKSGVSGGIMGISPYDFGIGIFGPALDEKGNSIAGVKLLEIMSEMYRLSIF</sequence>
<keyword id="KW-0378">Hydrolase</keyword>
<keyword id="KW-1185">Reference proteome</keyword>
<protein>
    <recommendedName>
        <fullName evidence="1">Glutaminase 2</fullName>
        <ecNumber evidence="1">3.5.1.2</ecNumber>
    </recommendedName>
</protein>
<comment type="catalytic activity">
    <reaction evidence="1 2">
        <text>L-glutamine + H2O = L-glutamate + NH4(+)</text>
        <dbReference type="Rhea" id="RHEA:15889"/>
        <dbReference type="ChEBI" id="CHEBI:15377"/>
        <dbReference type="ChEBI" id="CHEBI:28938"/>
        <dbReference type="ChEBI" id="CHEBI:29985"/>
        <dbReference type="ChEBI" id="CHEBI:58359"/>
        <dbReference type="EC" id="3.5.1.2"/>
    </reaction>
</comment>
<comment type="biophysicochemical properties">
    <kinetics>
        <KM evidence="2">7.6 mM for glutamine</KM>
    </kinetics>
</comment>
<comment type="subunit">
    <text evidence="1 2">Homotetramer.</text>
</comment>
<comment type="similarity">
    <text evidence="1">Belongs to the glutaminase family.</text>
</comment>
<accession>O07637</accession>
<gene>
    <name evidence="1" type="primary">glsA2</name>
    <name type="synonym">ylaM</name>
    <name type="ordered locus">BSU14830</name>
</gene>
<evidence type="ECO:0000255" key="1">
    <source>
        <dbReference type="HAMAP-Rule" id="MF_00313"/>
    </source>
</evidence>
<evidence type="ECO:0000269" key="2">
    <source>
    </source>
</evidence>